<gene>
    <name evidence="1" type="primary">hisF</name>
    <name type="ordered locus">Mlg_2614</name>
</gene>
<name>HIS6_ALKEH</name>
<dbReference type="EC" id="4.3.2.10" evidence="1"/>
<dbReference type="EMBL" id="CP000453">
    <property type="protein sequence ID" value="ABI57954.1"/>
    <property type="molecule type" value="Genomic_DNA"/>
</dbReference>
<dbReference type="RefSeq" id="WP_011630347.1">
    <property type="nucleotide sequence ID" value="NC_008340.1"/>
</dbReference>
<dbReference type="SMR" id="Q0A5D3"/>
<dbReference type="KEGG" id="aeh:Mlg_2614"/>
<dbReference type="eggNOG" id="COG0107">
    <property type="taxonomic scope" value="Bacteria"/>
</dbReference>
<dbReference type="HOGENOM" id="CLU_048577_4_0_6"/>
<dbReference type="OrthoDB" id="9781903at2"/>
<dbReference type="UniPathway" id="UPA00031">
    <property type="reaction ID" value="UER00010"/>
</dbReference>
<dbReference type="Proteomes" id="UP000001962">
    <property type="component" value="Chromosome"/>
</dbReference>
<dbReference type="GO" id="GO:0005737">
    <property type="term" value="C:cytoplasm"/>
    <property type="evidence" value="ECO:0007669"/>
    <property type="project" value="UniProtKB-SubCell"/>
</dbReference>
<dbReference type="GO" id="GO:0000107">
    <property type="term" value="F:imidazoleglycerol-phosphate synthase activity"/>
    <property type="evidence" value="ECO:0007669"/>
    <property type="project" value="UniProtKB-UniRule"/>
</dbReference>
<dbReference type="GO" id="GO:0016829">
    <property type="term" value="F:lyase activity"/>
    <property type="evidence" value="ECO:0007669"/>
    <property type="project" value="UniProtKB-KW"/>
</dbReference>
<dbReference type="GO" id="GO:0000105">
    <property type="term" value="P:L-histidine biosynthetic process"/>
    <property type="evidence" value="ECO:0007669"/>
    <property type="project" value="UniProtKB-UniRule"/>
</dbReference>
<dbReference type="CDD" id="cd04731">
    <property type="entry name" value="HisF"/>
    <property type="match status" value="1"/>
</dbReference>
<dbReference type="FunFam" id="3.20.20.70:FF:000006">
    <property type="entry name" value="Imidazole glycerol phosphate synthase subunit HisF"/>
    <property type="match status" value="1"/>
</dbReference>
<dbReference type="Gene3D" id="3.20.20.70">
    <property type="entry name" value="Aldolase class I"/>
    <property type="match status" value="1"/>
</dbReference>
<dbReference type="HAMAP" id="MF_01013">
    <property type="entry name" value="HisF"/>
    <property type="match status" value="1"/>
</dbReference>
<dbReference type="InterPro" id="IPR013785">
    <property type="entry name" value="Aldolase_TIM"/>
</dbReference>
<dbReference type="InterPro" id="IPR006062">
    <property type="entry name" value="His_biosynth"/>
</dbReference>
<dbReference type="InterPro" id="IPR004651">
    <property type="entry name" value="HisF"/>
</dbReference>
<dbReference type="InterPro" id="IPR050064">
    <property type="entry name" value="IGPS_HisA/HisF"/>
</dbReference>
<dbReference type="InterPro" id="IPR011060">
    <property type="entry name" value="RibuloseP-bd_barrel"/>
</dbReference>
<dbReference type="NCBIfam" id="TIGR00735">
    <property type="entry name" value="hisF"/>
    <property type="match status" value="1"/>
</dbReference>
<dbReference type="PANTHER" id="PTHR21235:SF2">
    <property type="entry name" value="IMIDAZOLE GLYCEROL PHOSPHATE SYNTHASE HISHF"/>
    <property type="match status" value="1"/>
</dbReference>
<dbReference type="PANTHER" id="PTHR21235">
    <property type="entry name" value="IMIDAZOLE GLYCEROL PHOSPHATE SYNTHASE SUBUNIT HISF/H IGP SYNTHASE SUBUNIT HISF/H"/>
    <property type="match status" value="1"/>
</dbReference>
<dbReference type="Pfam" id="PF00977">
    <property type="entry name" value="His_biosynth"/>
    <property type="match status" value="1"/>
</dbReference>
<dbReference type="SUPFAM" id="SSF51366">
    <property type="entry name" value="Ribulose-phoshate binding barrel"/>
    <property type="match status" value="1"/>
</dbReference>
<feature type="chain" id="PRO_1000063019" description="Imidazole glycerol phosphate synthase subunit HisF">
    <location>
        <begin position="1"/>
        <end position="265"/>
    </location>
</feature>
<feature type="active site" evidence="1">
    <location>
        <position position="12"/>
    </location>
</feature>
<feature type="active site" evidence="1">
    <location>
        <position position="131"/>
    </location>
</feature>
<keyword id="KW-0028">Amino-acid biosynthesis</keyword>
<keyword id="KW-0963">Cytoplasm</keyword>
<keyword id="KW-0368">Histidine biosynthesis</keyword>
<keyword id="KW-0456">Lyase</keyword>
<keyword id="KW-1185">Reference proteome</keyword>
<evidence type="ECO:0000255" key="1">
    <source>
        <dbReference type="HAMAP-Rule" id="MF_01013"/>
    </source>
</evidence>
<accession>Q0A5D3</accession>
<organism>
    <name type="scientific">Alkalilimnicola ehrlichii (strain ATCC BAA-1101 / DSM 17681 / MLHE-1)</name>
    <dbReference type="NCBI Taxonomy" id="187272"/>
    <lineage>
        <taxon>Bacteria</taxon>
        <taxon>Pseudomonadati</taxon>
        <taxon>Pseudomonadota</taxon>
        <taxon>Gammaproteobacteria</taxon>
        <taxon>Chromatiales</taxon>
        <taxon>Ectothiorhodospiraceae</taxon>
        <taxon>Alkalilimnicola</taxon>
    </lineage>
</organism>
<comment type="function">
    <text evidence="1">IGPS catalyzes the conversion of PRFAR and glutamine to IGP, AICAR and glutamate. The HisF subunit catalyzes the cyclization activity that produces IGP and AICAR from PRFAR using the ammonia provided by the HisH subunit.</text>
</comment>
<comment type="catalytic activity">
    <reaction evidence="1">
        <text>5-[(5-phospho-1-deoxy-D-ribulos-1-ylimino)methylamino]-1-(5-phospho-beta-D-ribosyl)imidazole-4-carboxamide + L-glutamine = D-erythro-1-(imidazol-4-yl)glycerol 3-phosphate + 5-amino-1-(5-phospho-beta-D-ribosyl)imidazole-4-carboxamide + L-glutamate + H(+)</text>
        <dbReference type="Rhea" id="RHEA:24793"/>
        <dbReference type="ChEBI" id="CHEBI:15378"/>
        <dbReference type="ChEBI" id="CHEBI:29985"/>
        <dbReference type="ChEBI" id="CHEBI:58278"/>
        <dbReference type="ChEBI" id="CHEBI:58359"/>
        <dbReference type="ChEBI" id="CHEBI:58475"/>
        <dbReference type="ChEBI" id="CHEBI:58525"/>
        <dbReference type="EC" id="4.3.2.10"/>
    </reaction>
</comment>
<comment type="pathway">
    <text evidence="1">Amino-acid biosynthesis; L-histidine biosynthesis; L-histidine from 5-phospho-alpha-D-ribose 1-diphosphate: step 5/9.</text>
</comment>
<comment type="subunit">
    <text evidence="1">Heterodimer of HisH and HisF.</text>
</comment>
<comment type="subcellular location">
    <subcellularLocation>
        <location evidence="1">Cytoplasm</location>
    </subcellularLocation>
</comment>
<comment type="similarity">
    <text evidence="1">Belongs to the HisA/HisF family.</text>
</comment>
<sequence length="265" mass="28065">MTVAKRIIPCLDVDGGRVVKGVKFVDIRDAGDPVEIARRYDAMGADEITFLDITASHERRDTMVQVVEKVASQVFIPLTVGGGIREVADIRRMLNAGADKVGINTAAVARPEFVAEAAERFGSQCIVVAVDAKQVSRADEPARWEVFTHGGRKATGLDAVEWAGRMAELGAGEILLTSMDRDGTQAGFDLALTRAVSDAVPVPVIASGGVGTLSDLADGVLEGGADAVLAASIFHFGRYTVAEAKRLMAERGITVRITGDERTDV</sequence>
<reference key="1">
    <citation type="submission" date="2006-08" db="EMBL/GenBank/DDBJ databases">
        <title>Complete sequence of Alkalilimnicola ehrilichei MLHE-1.</title>
        <authorList>
            <person name="Copeland A."/>
            <person name="Lucas S."/>
            <person name="Lapidus A."/>
            <person name="Barry K."/>
            <person name="Detter J.C."/>
            <person name="Glavina del Rio T."/>
            <person name="Hammon N."/>
            <person name="Israni S."/>
            <person name="Dalin E."/>
            <person name="Tice H."/>
            <person name="Pitluck S."/>
            <person name="Sims D."/>
            <person name="Brettin T."/>
            <person name="Bruce D."/>
            <person name="Han C."/>
            <person name="Tapia R."/>
            <person name="Gilna P."/>
            <person name="Schmutz J."/>
            <person name="Larimer F."/>
            <person name="Land M."/>
            <person name="Hauser L."/>
            <person name="Kyrpides N."/>
            <person name="Mikhailova N."/>
            <person name="Oremland R.S."/>
            <person name="Hoeft S.E."/>
            <person name="Switzer-Blum J."/>
            <person name="Kulp T."/>
            <person name="King G."/>
            <person name="Tabita R."/>
            <person name="Witte B."/>
            <person name="Santini J.M."/>
            <person name="Basu P."/>
            <person name="Hollibaugh J.T."/>
            <person name="Xie G."/>
            <person name="Stolz J.F."/>
            <person name="Richardson P."/>
        </authorList>
    </citation>
    <scope>NUCLEOTIDE SEQUENCE [LARGE SCALE GENOMIC DNA]</scope>
    <source>
        <strain>ATCC BAA-1101 / DSM 17681 / MLHE-1</strain>
    </source>
</reference>
<protein>
    <recommendedName>
        <fullName evidence="1">Imidazole glycerol phosphate synthase subunit HisF</fullName>
        <ecNumber evidence="1">4.3.2.10</ecNumber>
    </recommendedName>
    <alternativeName>
        <fullName evidence="1">IGP synthase cyclase subunit</fullName>
    </alternativeName>
    <alternativeName>
        <fullName evidence="1">IGP synthase subunit HisF</fullName>
    </alternativeName>
    <alternativeName>
        <fullName evidence="1">ImGP synthase subunit HisF</fullName>
        <shortName evidence="1">IGPS subunit HisF</shortName>
    </alternativeName>
</protein>
<proteinExistence type="inferred from homology"/>